<reference key="1">
    <citation type="journal article" date="1992" name="J. Biol. Chem.">
        <title>Isolation, expression, and mutation of a rabbit skeletal muscle cDNA clone for troponin I. The role of the NH2 terminus of fast skeletal muscle troponin I in its biological activity.</title>
        <authorList>
            <person name="Sheng Z."/>
            <person name="Pan B.S."/>
            <person name="Miller T."/>
            <person name="Potter J.D."/>
        </authorList>
    </citation>
    <scope>NUCLEOTIDE SEQUENCE [MRNA]</scope>
    <source>
        <tissue>Skeletal muscle</tissue>
    </source>
</reference>
<reference key="2">
    <citation type="journal article" date="1993" name="DNA Seq.">
        <title>Characterization of a rabbit fast skeletal troponin I cDNA: a comparative sequence analysis of vertebrate isoforms and tissue-specific expression of a single copy gene.</title>
        <authorList>
            <person name="Wu Q.L."/>
            <person name="Raychowdhury M.K."/>
            <person name="Du Y."/>
            <person name="Jha P.K."/>
            <person name="Leavis P.C."/>
            <person name="Sarkar S."/>
        </authorList>
    </citation>
    <scope>NUCLEOTIDE SEQUENCE [MRNA]</scope>
    <source>
        <tissue>Muscle</tissue>
    </source>
</reference>
<reference key="3">
    <citation type="journal article" date="1993" name="FEBS Lett.">
        <title>E. coli expression and characterization of a mutant troponin I with the three cysteine residues substituted.</title>
        <authorList>
            <person name="Kluwe L."/>
            <person name="Maeda K."/>
            <person name="Maeda Y."/>
        </authorList>
    </citation>
    <scope>NUCLEOTIDE SEQUENCE [MRNA]</scope>
</reference>
<reference key="4">
    <citation type="journal article" date="1975" name="Biochem. J.">
        <title>The amino acid sequence of troponin I from rabbit skeletal muscle.</title>
        <authorList>
            <person name="Wilkinson J.M."/>
            <person name="Grand R.J.A."/>
        </authorList>
    </citation>
    <scope>PROTEIN SEQUENCE OF 2-182</scope>
    <scope>ACETYLATION AT GLY-2</scope>
    <source>
        <tissue>Skeletal muscle</tissue>
    </source>
</reference>
<reference key="5">
    <citation type="journal article" date="1978" name="Nature">
        <title>Comparison of amino acid sequence of troponin I from different striated muscles.</title>
        <authorList>
            <person name="Wilkinson J.M."/>
            <person name="Grand R.J.A."/>
        </authorList>
    </citation>
    <scope>SEQUENCE REVISION</scope>
</reference>
<reference key="6">
    <citation type="journal article" date="1983" name="Nature">
        <title>A new troponin T and cDNA clones for 13 different muscle proteins, found by shotgun sequencing.</title>
        <authorList>
            <person name="Putney S.D."/>
            <person name="Herlihy W.C."/>
            <person name="Schimmel P.R."/>
        </authorList>
    </citation>
    <scope>NUCLEOTIDE SEQUENCE [MRNA] OF 1-25 AND 166-178</scope>
</reference>
<reference key="7">
    <citation type="journal article" date="1974" name="FEBS Lett.">
        <title>The phosphorylation sites of troponin I from white skeletal muscle of the rabbit.</title>
        <authorList>
            <person name="Moir A.J.G."/>
            <person name="Wilkinson J.M."/>
            <person name="Perry S.V."/>
        </authorList>
    </citation>
    <scope>PHOSPHORYLATION AT THR-12 AND SER-118</scope>
    <source>
        <tissue>Skeletal muscle</tissue>
    </source>
</reference>
<reference key="8">
    <citation type="journal article" date="1974" name="FEBS Lett.">
        <title>The amino acid sequences of the phosphorylated sites in troponin-I from rabbit skeletal muscle.</title>
        <authorList>
            <person name="Huang T.S."/>
            <person name="Bylund D.B."/>
            <person name="Stull J.T."/>
            <person name="Krebs E.G."/>
        </authorList>
    </citation>
    <scope>PHOSPHORYLATION AT THR-12 AND SER-118</scope>
    <source>
        <tissue>Skeletal muscle</tissue>
    </source>
</reference>
<reference key="9">
    <citation type="journal article" date="1998" name="Proc. Natl. Acad. Sci. U.S.A.">
        <title>Crystal structure of troponin C in complex with troponin I fragment at 2.3-A resolution.</title>
        <authorList>
            <person name="Vassylyev D.G."/>
            <person name="Takeda S."/>
            <person name="Wakatsuki S."/>
            <person name="Maeda K."/>
            <person name="Maeda Y."/>
        </authorList>
    </citation>
    <scope>X-RAY CRYSTALLOGRAPHY (2.3 ANGSTROMS) OF 1-48 IN COMPLEX WITH TNC</scope>
</reference>
<protein>
    <recommendedName>
        <fullName>Troponin I, fast skeletal muscle</fullName>
    </recommendedName>
    <alternativeName>
        <fullName>Troponin I, fast-twitch isoform</fullName>
    </alternativeName>
</protein>
<gene>
    <name type="primary">TNNI2</name>
</gene>
<evidence type="ECO:0000269" key="1">
    <source>
    </source>
</evidence>
<evidence type="ECO:0000269" key="2">
    <source>
    </source>
</evidence>
<evidence type="ECO:0000269" key="3">
    <source>
    </source>
</evidence>
<evidence type="ECO:0000269" key="4">
    <source>
    </source>
</evidence>
<evidence type="ECO:0000305" key="5"/>
<evidence type="ECO:0007829" key="6">
    <source>
        <dbReference type="PDB" id="1A2X"/>
    </source>
</evidence>
<evidence type="ECO:0007829" key="7">
    <source>
        <dbReference type="PDB" id="1NPQ"/>
    </source>
</evidence>
<comment type="function">
    <text>Troponin I is the inhibitory subunit of troponin, the thin filament regulatory complex which confers calcium-sensitivity to striated muscle actomyosin ATPase activity.</text>
</comment>
<comment type="subunit">
    <text evidence="4">Binds to actin and tropomyosin.</text>
</comment>
<comment type="similarity">
    <text evidence="5">Belongs to the troponin I family.</text>
</comment>
<sequence length="182" mass="21214">MGDEEKRNRAITARRQHLKSVMLQIAATELEKEEGRREAEKQNYLAEHCPPLSLPGSMAEVQELCKQLHAKIDAAEEEKYDMEIKVQKSSKELEDMNQKLFDLRGKFKRPPLRRVRMSADAMLKALLGSKHKVCMDLRANLKQVKKEDTEKERDLRDVGDWRKNIEEKSGMEGRKKMFESES</sequence>
<dbReference type="EMBL" id="L04347">
    <property type="protein sequence ID" value="AAA31490.1"/>
    <property type="molecule type" value="mRNA"/>
</dbReference>
<dbReference type="EMBL" id="X14190">
    <property type="protein sequence ID" value="CAA32392.1"/>
    <property type="molecule type" value="mRNA"/>
</dbReference>
<dbReference type="EMBL" id="S61403">
    <property type="protein sequence ID" value="AAB26824.1"/>
    <property type="molecule type" value="mRNA"/>
</dbReference>
<dbReference type="EMBL" id="V00897">
    <property type="protein sequence ID" value="CAA24262.1"/>
    <property type="molecule type" value="mRNA"/>
</dbReference>
<dbReference type="EMBL" id="V00898">
    <property type="protein sequence ID" value="CAA24263.1"/>
    <property type="molecule type" value="mRNA"/>
</dbReference>
<dbReference type="PIR" id="A45060">
    <property type="entry name" value="TPRBIS"/>
</dbReference>
<dbReference type="PIR" id="I46513">
    <property type="entry name" value="I46513"/>
</dbReference>
<dbReference type="RefSeq" id="NP_001076252.1">
    <property type="nucleotide sequence ID" value="NM_001082783.1"/>
</dbReference>
<dbReference type="PDB" id="1A2X">
    <property type="method" value="X-ray"/>
    <property type="resolution" value="2.30 A"/>
    <property type="chains" value="B=2-48"/>
</dbReference>
<dbReference type="PDB" id="1NPQ">
    <property type="method" value="NMR"/>
    <property type="chains" value="B=116-132"/>
</dbReference>
<dbReference type="PDBsum" id="1A2X"/>
<dbReference type="PDBsum" id="1NPQ"/>
<dbReference type="BMRB" id="P02643"/>
<dbReference type="SMR" id="P02643"/>
<dbReference type="BioGRID" id="1172600">
    <property type="interactions" value="5"/>
</dbReference>
<dbReference type="CORUM" id="P02643"/>
<dbReference type="FunCoup" id="P02643">
    <property type="interactions" value="23"/>
</dbReference>
<dbReference type="IntAct" id="P02643">
    <property type="interactions" value="2"/>
</dbReference>
<dbReference type="iPTMnet" id="P02643"/>
<dbReference type="GeneID" id="100009581"/>
<dbReference type="CTD" id="7136"/>
<dbReference type="InParanoid" id="P02643"/>
<dbReference type="EvolutionaryTrace" id="P02643"/>
<dbReference type="Proteomes" id="UP000001811">
    <property type="component" value="Unplaced"/>
</dbReference>
<dbReference type="GO" id="GO:0005861">
    <property type="term" value="C:troponin complex"/>
    <property type="evidence" value="ECO:0007669"/>
    <property type="project" value="InterPro"/>
</dbReference>
<dbReference type="GO" id="GO:0003779">
    <property type="term" value="F:actin binding"/>
    <property type="evidence" value="ECO:0007669"/>
    <property type="project" value="UniProtKB-KW"/>
</dbReference>
<dbReference type="GO" id="GO:0031014">
    <property type="term" value="F:troponin T binding"/>
    <property type="evidence" value="ECO:0000353"/>
    <property type="project" value="UniProtKB"/>
</dbReference>
<dbReference type="GO" id="GO:0060048">
    <property type="term" value="P:cardiac muscle contraction"/>
    <property type="evidence" value="ECO:0007669"/>
    <property type="project" value="TreeGrafter"/>
</dbReference>
<dbReference type="GO" id="GO:0003009">
    <property type="term" value="P:skeletal muscle contraction"/>
    <property type="evidence" value="ECO:0007669"/>
    <property type="project" value="TreeGrafter"/>
</dbReference>
<dbReference type="FunFam" id="1.20.5.350:FF:000002">
    <property type="entry name" value="troponin I, fast skeletal muscle"/>
    <property type="match status" value="1"/>
</dbReference>
<dbReference type="Gene3D" id="1.20.5.350">
    <property type="match status" value="1"/>
</dbReference>
<dbReference type="Gene3D" id="6.10.250.180">
    <property type="match status" value="1"/>
</dbReference>
<dbReference type="InterPro" id="IPR001978">
    <property type="entry name" value="Troponin"/>
</dbReference>
<dbReference type="InterPro" id="IPR050875">
    <property type="entry name" value="Troponin_I"/>
</dbReference>
<dbReference type="InterPro" id="IPR038077">
    <property type="entry name" value="Troponin_sf"/>
</dbReference>
<dbReference type="PANTHER" id="PTHR13738">
    <property type="entry name" value="TROPONIN I"/>
    <property type="match status" value="1"/>
</dbReference>
<dbReference type="PANTHER" id="PTHR13738:SF15">
    <property type="entry name" value="TROPONIN I, FAST SKELETAL MUSCLE"/>
    <property type="match status" value="1"/>
</dbReference>
<dbReference type="Pfam" id="PF00992">
    <property type="entry name" value="Troponin"/>
    <property type="match status" value="1"/>
</dbReference>
<dbReference type="SUPFAM" id="SSF90250">
    <property type="entry name" value="Troponin coil-coiled subunits"/>
    <property type="match status" value="1"/>
</dbReference>
<accession>P02643</accession>
<keyword id="KW-0002">3D-structure</keyword>
<keyword id="KW-0007">Acetylation</keyword>
<keyword id="KW-0009">Actin-binding</keyword>
<keyword id="KW-0903">Direct protein sequencing</keyword>
<keyword id="KW-0514">Muscle protein</keyword>
<keyword id="KW-0597">Phosphoprotein</keyword>
<keyword id="KW-1185">Reference proteome</keyword>
<proteinExistence type="evidence at protein level"/>
<organism>
    <name type="scientific">Oryctolagus cuniculus</name>
    <name type="common">Rabbit</name>
    <dbReference type="NCBI Taxonomy" id="9986"/>
    <lineage>
        <taxon>Eukaryota</taxon>
        <taxon>Metazoa</taxon>
        <taxon>Chordata</taxon>
        <taxon>Craniata</taxon>
        <taxon>Vertebrata</taxon>
        <taxon>Euteleostomi</taxon>
        <taxon>Mammalia</taxon>
        <taxon>Eutheria</taxon>
        <taxon>Euarchontoglires</taxon>
        <taxon>Glires</taxon>
        <taxon>Lagomorpha</taxon>
        <taxon>Leporidae</taxon>
        <taxon>Oryctolagus</taxon>
    </lineage>
</organism>
<feature type="initiator methionine" description="Removed" evidence="1">
    <location>
        <position position="1"/>
    </location>
</feature>
<feature type="chain" id="PRO_0000186145" description="Troponin I, fast skeletal muscle">
    <location>
        <begin position="2"/>
        <end position="182"/>
    </location>
</feature>
<feature type="region of interest" description="Involved in binding TNC">
    <location>
        <begin position="2"/>
        <end position="48"/>
    </location>
</feature>
<feature type="region of interest" description="Involved in binding TNC and actin">
    <location>
        <begin position="97"/>
        <end position="117"/>
    </location>
</feature>
<feature type="modified residue" description="N-acetylglycine" evidence="1">
    <location>
        <position position="2"/>
    </location>
</feature>
<feature type="modified residue" description="Phosphothreonine; by PHK" evidence="2 3">
    <location>
        <position position="12"/>
    </location>
</feature>
<feature type="modified residue" description="Phosphoserine; by PKA" evidence="2 3">
    <location>
        <position position="118"/>
    </location>
</feature>
<feature type="sequence conflict" description="In Ref. 4; AA sequence." evidence="5" ref="4">
    <location>
        <begin position="154"/>
        <end position="156"/>
    </location>
</feature>
<feature type="helix" evidence="6">
    <location>
        <begin position="6"/>
        <end position="32"/>
    </location>
</feature>
<feature type="helix" evidence="7">
    <location>
        <begin position="120"/>
        <end position="126"/>
    </location>
</feature>
<name>TNNI2_RABIT</name>